<evidence type="ECO:0000250" key="1"/>
<evidence type="ECO:0000250" key="2">
    <source>
        <dbReference type="UniProtKB" id="P00157"/>
    </source>
</evidence>
<evidence type="ECO:0000255" key="3">
    <source>
        <dbReference type="PROSITE-ProRule" id="PRU00967"/>
    </source>
</evidence>
<evidence type="ECO:0000255" key="4">
    <source>
        <dbReference type="PROSITE-ProRule" id="PRU00968"/>
    </source>
</evidence>
<gene>
    <name type="primary">MT-CYB</name>
    <name type="synonym">COB</name>
    <name type="synonym">CYTB</name>
    <name type="synonym">MTCYB</name>
</gene>
<sequence length="308" mass="34561">FGSLLGICLMTQIITGLLLAMHYTADTTLAFTSVAHMCRNVQFGWLIRNLHANGASFFFICIYLHIGRGLYYGSYLYKETWNIGVILLLTLMATAFVGYVLPWGQMSFWGATVITNLFSAIPYIGQTLVEWAWGGFSVDNPTLTRFFALHFLLHFIIAGLTFIHLTLLHETGSNNPLGISSNCDKIPFHPYFSTKDALGFILLLFPLMTLAMFSPNLLGDPENFTPANPLVTPPHIKPEWYFLFAYAILRSIPNKLGGVLALAASVLILLLIPLLHTSKQRTMTFRPLSQFLFWTLVMNLLILTWIGS</sequence>
<feature type="chain" id="PRO_0000060576" description="Cytochrome b">
    <location>
        <begin position="1" status="less than"/>
        <end position="308" status="greater than"/>
    </location>
</feature>
<feature type="transmembrane region" description="Helical" evidence="2">
    <location>
        <begin position="1"/>
        <end position="21"/>
    </location>
</feature>
<feature type="transmembrane region" description="Helical" evidence="2">
    <location>
        <begin position="45"/>
        <end position="66"/>
    </location>
</feature>
<feature type="transmembrane region" description="Helical" evidence="2">
    <location>
        <begin position="81"/>
        <end position="101"/>
    </location>
</feature>
<feature type="transmembrane region" description="Helical" evidence="2">
    <location>
        <begin position="146"/>
        <end position="166"/>
    </location>
</feature>
<feature type="transmembrane region" description="Helical" evidence="2">
    <location>
        <begin position="194"/>
        <end position="214"/>
    </location>
</feature>
<feature type="transmembrane region" description="Helical" evidence="2">
    <location>
        <begin position="256"/>
        <end position="276"/>
    </location>
</feature>
<feature type="transmembrane region" description="Helical" evidence="2">
    <location>
        <begin position="288"/>
        <end position="308"/>
    </location>
</feature>
<feature type="binding site" description="axial binding residue" evidence="2">
    <location>
        <position position="51"/>
    </location>
    <ligand>
        <name>heme b</name>
        <dbReference type="ChEBI" id="CHEBI:60344"/>
        <label>b562</label>
    </ligand>
    <ligandPart>
        <name>Fe</name>
        <dbReference type="ChEBI" id="CHEBI:18248"/>
    </ligandPart>
</feature>
<feature type="binding site" description="axial binding residue" evidence="2">
    <location>
        <position position="65"/>
    </location>
    <ligand>
        <name>heme b</name>
        <dbReference type="ChEBI" id="CHEBI:60344"/>
        <label>b566</label>
    </ligand>
    <ligandPart>
        <name>Fe</name>
        <dbReference type="ChEBI" id="CHEBI:18248"/>
    </ligandPart>
</feature>
<feature type="binding site" description="axial binding residue" evidence="2">
    <location>
        <position position="150"/>
    </location>
    <ligand>
        <name>heme b</name>
        <dbReference type="ChEBI" id="CHEBI:60344"/>
        <label>b562</label>
    </ligand>
    <ligandPart>
        <name>Fe</name>
        <dbReference type="ChEBI" id="CHEBI:18248"/>
    </ligandPart>
</feature>
<feature type="binding site" description="axial binding residue" evidence="2">
    <location>
        <position position="164"/>
    </location>
    <ligand>
        <name>heme b</name>
        <dbReference type="ChEBI" id="CHEBI:60344"/>
        <label>b566</label>
    </ligand>
    <ligandPart>
        <name>Fe</name>
        <dbReference type="ChEBI" id="CHEBI:18248"/>
    </ligandPart>
</feature>
<feature type="binding site" evidence="2">
    <location>
        <position position="169"/>
    </location>
    <ligand>
        <name>a ubiquinone</name>
        <dbReference type="ChEBI" id="CHEBI:16389"/>
    </ligand>
</feature>
<feature type="non-terminal residue">
    <location>
        <position position="1"/>
    </location>
</feature>
<feature type="non-terminal residue">
    <location>
        <position position="308"/>
    </location>
</feature>
<geneLocation type="mitochondrion"/>
<comment type="function">
    <text evidence="2">Component of the ubiquinol-cytochrome c reductase complex (complex III or cytochrome b-c1 complex) that is part of the mitochondrial respiratory chain. The b-c1 complex mediates electron transfer from ubiquinol to cytochrome c. Contributes to the generation of a proton gradient across the mitochondrial membrane that is then used for ATP synthesis.</text>
</comment>
<comment type="cofactor">
    <cofactor evidence="2">
        <name>heme b</name>
        <dbReference type="ChEBI" id="CHEBI:60344"/>
    </cofactor>
    <text evidence="2">Binds 2 heme b groups non-covalently.</text>
</comment>
<comment type="subunit">
    <text evidence="2">The cytochrome bc1 complex contains 11 subunits: 3 respiratory subunits (MT-CYB, CYC1 and UQCRFS1), 2 core proteins (UQCRC1 and UQCRC2) and 6 low-molecular weight proteins (UQCRH/QCR6, UQCRB/QCR7, UQCRQ/QCR8, UQCR10/QCR9, UQCR11/QCR10 and a cleavage product of UQCRFS1). This cytochrome bc1 complex then forms a dimer.</text>
</comment>
<comment type="subcellular location">
    <subcellularLocation>
        <location evidence="2">Mitochondrion inner membrane</location>
        <topology evidence="2">Multi-pass membrane protein</topology>
    </subcellularLocation>
</comment>
<comment type="miscellaneous">
    <text evidence="1">Heme 1 (or BL or b562) is low-potential and absorbs at about 562 nm, and heme 2 (or BH or b566) is high-potential and absorbs at about 566 nm.</text>
</comment>
<comment type="similarity">
    <text evidence="3 4">Belongs to the cytochrome b family.</text>
</comment>
<comment type="caution">
    <text evidence="2">The full-length protein contains only eight transmembrane helices, not nine as predicted by bioinformatics tools.</text>
</comment>
<proteinExistence type="inferred from homology"/>
<name>CYB_ZARST</name>
<accession>P29633</accession>
<keyword id="KW-0249">Electron transport</keyword>
<keyword id="KW-0349">Heme</keyword>
<keyword id="KW-0408">Iron</keyword>
<keyword id="KW-0472">Membrane</keyword>
<keyword id="KW-0479">Metal-binding</keyword>
<keyword id="KW-0496">Mitochondrion</keyword>
<keyword id="KW-0999">Mitochondrion inner membrane</keyword>
<keyword id="KW-0679">Respiratory chain</keyword>
<keyword id="KW-0812">Transmembrane</keyword>
<keyword id="KW-1133">Transmembrane helix</keyword>
<keyword id="KW-0813">Transport</keyword>
<keyword id="KW-0830">Ubiquinone</keyword>
<dbReference type="EMBL" id="X60947">
    <property type="protein sequence ID" value="CAA43282.1"/>
    <property type="molecule type" value="Genomic_DNA"/>
</dbReference>
<dbReference type="PIR" id="S22921">
    <property type="entry name" value="S22921"/>
</dbReference>
<dbReference type="SMR" id="P29633"/>
<dbReference type="GO" id="GO:0005743">
    <property type="term" value="C:mitochondrial inner membrane"/>
    <property type="evidence" value="ECO:0007669"/>
    <property type="project" value="UniProtKB-SubCell"/>
</dbReference>
<dbReference type="GO" id="GO:0046872">
    <property type="term" value="F:metal ion binding"/>
    <property type="evidence" value="ECO:0007669"/>
    <property type="project" value="UniProtKB-KW"/>
</dbReference>
<dbReference type="GO" id="GO:0008121">
    <property type="term" value="F:ubiquinol-cytochrome-c reductase activity"/>
    <property type="evidence" value="ECO:0007669"/>
    <property type="project" value="TreeGrafter"/>
</dbReference>
<dbReference type="GO" id="GO:0006122">
    <property type="term" value="P:mitochondrial electron transport, ubiquinol to cytochrome c"/>
    <property type="evidence" value="ECO:0007669"/>
    <property type="project" value="TreeGrafter"/>
</dbReference>
<dbReference type="CDD" id="cd00290">
    <property type="entry name" value="cytochrome_b_C"/>
    <property type="match status" value="1"/>
</dbReference>
<dbReference type="CDD" id="cd00284">
    <property type="entry name" value="Cytochrome_b_N"/>
    <property type="match status" value="1"/>
</dbReference>
<dbReference type="Gene3D" id="1.20.810.10">
    <property type="entry name" value="Cytochrome Bc1 Complex, Chain C"/>
    <property type="match status" value="1"/>
</dbReference>
<dbReference type="InterPro" id="IPR005798">
    <property type="entry name" value="Cyt_b/b6_C"/>
</dbReference>
<dbReference type="InterPro" id="IPR036150">
    <property type="entry name" value="Cyt_b/b6_C_sf"/>
</dbReference>
<dbReference type="InterPro" id="IPR005797">
    <property type="entry name" value="Cyt_b/b6_N"/>
</dbReference>
<dbReference type="InterPro" id="IPR027387">
    <property type="entry name" value="Cytb/b6-like_sf"/>
</dbReference>
<dbReference type="InterPro" id="IPR048260">
    <property type="entry name" value="Cytochrome_b_C_euk/bac"/>
</dbReference>
<dbReference type="InterPro" id="IPR048259">
    <property type="entry name" value="Cytochrome_b_N_euk/bac"/>
</dbReference>
<dbReference type="InterPro" id="IPR016174">
    <property type="entry name" value="Di-haem_cyt_TM"/>
</dbReference>
<dbReference type="PANTHER" id="PTHR19271">
    <property type="entry name" value="CYTOCHROME B"/>
    <property type="match status" value="1"/>
</dbReference>
<dbReference type="PANTHER" id="PTHR19271:SF16">
    <property type="entry name" value="CYTOCHROME B"/>
    <property type="match status" value="1"/>
</dbReference>
<dbReference type="Pfam" id="PF00032">
    <property type="entry name" value="Cytochrom_B_C"/>
    <property type="match status" value="1"/>
</dbReference>
<dbReference type="Pfam" id="PF00033">
    <property type="entry name" value="Cytochrome_B"/>
    <property type="match status" value="1"/>
</dbReference>
<dbReference type="SUPFAM" id="SSF81648">
    <property type="entry name" value="a domain/subunit of cytochrome bc1 complex (Ubiquinol-cytochrome c reductase)"/>
    <property type="match status" value="1"/>
</dbReference>
<dbReference type="SUPFAM" id="SSF81342">
    <property type="entry name" value="Transmembrane di-heme cytochromes"/>
    <property type="match status" value="1"/>
</dbReference>
<dbReference type="PROSITE" id="PS51003">
    <property type="entry name" value="CYTB_CTER"/>
    <property type="match status" value="1"/>
</dbReference>
<dbReference type="PROSITE" id="PS51002">
    <property type="entry name" value="CYTB_NTER"/>
    <property type="match status" value="1"/>
</dbReference>
<protein>
    <recommendedName>
        <fullName>Cytochrome b</fullName>
    </recommendedName>
    <alternativeName>
        <fullName>Complex III subunit 3</fullName>
    </alternativeName>
    <alternativeName>
        <fullName>Complex III subunit III</fullName>
    </alternativeName>
    <alternativeName>
        <fullName>Cytochrome b-c1 complex subunit 3</fullName>
    </alternativeName>
    <alternativeName>
        <fullName>Ubiquinol-cytochrome-c reductase complex cytochrome b subunit</fullName>
    </alternativeName>
</protein>
<organism>
    <name type="scientific">Zaratornis stresemanni</name>
    <name type="common">White-cheeked cotinga</name>
    <name type="synonym">Ampelion stresemanni</name>
    <dbReference type="NCBI Taxonomy" id="381442"/>
    <lineage>
        <taxon>Eukaryota</taxon>
        <taxon>Metazoa</taxon>
        <taxon>Chordata</taxon>
        <taxon>Craniata</taxon>
        <taxon>Vertebrata</taxon>
        <taxon>Euteleostomi</taxon>
        <taxon>Archelosauria</taxon>
        <taxon>Archosauria</taxon>
        <taxon>Dinosauria</taxon>
        <taxon>Saurischia</taxon>
        <taxon>Theropoda</taxon>
        <taxon>Coelurosauria</taxon>
        <taxon>Aves</taxon>
        <taxon>Neognathae</taxon>
        <taxon>Neoaves</taxon>
        <taxon>Telluraves</taxon>
        <taxon>Australaves</taxon>
        <taxon>Passeriformes</taxon>
        <taxon>Cotingidae</taxon>
        <taxon>Zaratornis</taxon>
    </lineage>
</organism>
<reference key="1">
    <citation type="journal article" date="1991" name="Proc. R. Soc. B">
        <title>Mitochondrial resolution of a deep branch in the genealogical tree for perching birds.</title>
        <authorList>
            <person name="Edwards S.V."/>
            <person name="Arctander P."/>
            <person name="Wilson A.C."/>
        </authorList>
    </citation>
    <scope>NUCLEOTIDE SEQUENCE [GENOMIC DNA]</scope>
</reference>
<reference key="2">
    <citation type="journal article" date="1996" name="Proc. R. Soc. B">
        <authorList>
            <person name="Edwards S.V."/>
            <person name="Arctander P."/>
        </authorList>
    </citation>
    <scope>ERRATUM OF PUBMED:1676522</scope>
</reference>